<protein>
    <recommendedName>
        <fullName>UV radiation resistance-associated gene protein</fullName>
    </recommendedName>
    <alternativeName>
        <fullName>p63</fullName>
    </alternativeName>
</protein>
<feature type="chain" id="PRO_0000065750" description="UV radiation resistance-associated gene protein">
    <location>
        <begin position="1"/>
        <end position="699"/>
    </location>
</feature>
<feature type="domain" description="C2" evidence="2">
    <location>
        <begin position="23"/>
        <end position="149"/>
    </location>
</feature>
<feature type="region of interest" description="Disordered" evidence="3">
    <location>
        <begin position="1"/>
        <end position="24"/>
    </location>
</feature>
<feature type="region of interest" description="Sufficient for interaction with STX7; VTI1B AND STX8" evidence="19">
    <location>
        <begin position="200"/>
        <end position="269"/>
    </location>
</feature>
<feature type="region of interest" description="Sufficient for interaction with VPS16, required for interaction with CEP63" evidence="7 15">
    <location>
        <begin position="270"/>
        <end position="442"/>
    </location>
</feature>
<feature type="region of interest" description="Required for interaction with PRKDC, XRCC6 and XRCC5" evidence="15">
    <location>
        <begin position="443"/>
        <end position="699"/>
    </location>
</feature>
<feature type="region of interest" description="Disordered" evidence="3">
    <location>
        <begin position="486"/>
        <end position="591"/>
    </location>
</feature>
<feature type="coiled-coil region" evidence="1">
    <location>
        <begin position="224"/>
        <end position="305"/>
    </location>
</feature>
<feature type="compositionally biased region" description="Low complexity" evidence="3">
    <location>
        <begin position="1"/>
        <end position="10"/>
    </location>
</feature>
<feature type="compositionally biased region" description="Polar residues" evidence="3">
    <location>
        <begin position="523"/>
        <end position="535"/>
    </location>
</feature>
<feature type="compositionally biased region" description="Low complexity" evidence="3">
    <location>
        <begin position="545"/>
        <end position="556"/>
    </location>
</feature>
<feature type="compositionally biased region" description="Basic and acidic residues" evidence="3">
    <location>
        <begin position="557"/>
        <end position="567"/>
    </location>
</feature>
<feature type="modified residue" description="Phosphoserine" evidence="20">
    <location>
        <position position="493"/>
    </location>
</feature>
<feature type="modified residue" description="Phosphoserine; by MTOR" evidence="20 26 27 29 30">
    <location>
        <position position="498"/>
    </location>
</feature>
<feature type="modified residue" description="Phosphoserine" evidence="20">
    <location>
        <position position="508"/>
    </location>
</feature>
<feature type="modified residue" description="Phosphothreonine" evidence="25 28 30">
    <location>
        <position position="518"/>
    </location>
</feature>
<feature type="modified residue" description="Phosphoserine" evidence="20">
    <location>
        <position position="522"/>
    </location>
</feature>
<feature type="modified residue" description="Phosphoserine" evidence="20">
    <location>
        <position position="549"/>
    </location>
</feature>
<feature type="modified residue" description="Phosphoserine" evidence="20 30">
    <location>
        <position position="550"/>
    </location>
</feature>
<feature type="modified residue" description="Phosphoserine" evidence="27">
    <location>
        <position position="571"/>
    </location>
</feature>
<feature type="modified residue" description="Phosphoserine" evidence="20">
    <location>
        <position position="582"/>
    </location>
</feature>
<feature type="modified residue" description="Phosphoserine" evidence="30">
    <location>
        <position position="689"/>
    </location>
</feature>
<feature type="splice variant" id="VSP_056176" description="In isoform 2." evidence="23">
    <location>
        <begin position="1"/>
        <end position="372"/>
    </location>
</feature>
<feature type="sequence variant" id="VAR_059737" description="In dbSNP:rs7118567.">
    <original>P</original>
    <variation>H</variation>
    <location>
        <position position="10"/>
    </location>
</feature>
<feature type="mutagenesis site" description="Abolishes phosphorylation by MTOR, decreases interaction with RUBCN, increases interaction with VPS16 and VPS39, promotes autophagosome maturation and endosome-lysosomal degradation of EGFR." evidence="20">
    <original>S</original>
    <variation>A</variation>
    <location>
        <position position="498"/>
    </location>
</feature>
<keyword id="KW-0002">3D-structure</keyword>
<keyword id="KW-0025">Alternative splicing</keyword>
<keyword id="KW-0137">Centromere</keyword>
<keyword id="KW-0158">Chromosome</keyword>
<keyword id="KW-0175">Coiled coil</keyword>
<keyword id="KW-0968">Cytoplasmic vesicle</keyword>
<keyword id="KW-0227">DNA damage</keyword>
<keyword id="KW-0234">DNA repair</keyword>
<keyword id="KW-0256">Endoplasmic reticulum</keyword>
<keyword id="KW-0967">Endosome</keyword>
<keyword id="KW-0458">Lysosome</keyword>
<keyword id="KW-0597">Phosphoprotein</keyword>
<keyword id="KW-1267">Proteomics identification</keyword>
<keyword id="KW-1185">Reference proteome</keyword>
<accession>Q9P2Y5</accession>
<accession>B3KTC1</accession>
<accession>O00392</accession>
<evidence type="ECO:0000255" key="1"/>
<evidence type="ECO:0000255" key="2">
    <source>
        <dbReference type="PROSITE-ProRule" id="PRU00041"/>
    </source>
</evidence>
<evidence type="ECO:0000256" key="3">
    <source>
        <dbReference type="SAM" id="MobiDB-lite"/>
    </source>
</evidence>
<evidence type="ECO:0000269" key="4">
    <source>
    </source>
</evidence>
<evidence type="ECO:0000269" key="5">
    <source>
    </source>
</evidence>
<evidence type="ECO:0000269" key="6">
    <source>
    </source>
</evidence>
<evidence type="ECO:0000269" key="7">
    <source>
    </source>
</evidence>
<evidence type="ECO:0000269" key="8">
    <source>
    </source>
</evidence>
<evidence type="ECO:0000269" key="9">
    <source>
    </source>
</evidence>
<evidence type="ECO:0000269" key="10">
    <source>
    </source>
</evidence>
<evidence type="ECO:0000269" key="11">
    <source>
    </source>
</evidence>
<evidence type="ECO:0000269" key="12">
    <source>
    </source>
</evidence>
<evidence type="ECO:0000269" key="13">
    <source>
    </source>
</evidence>
<evidence type="ECO:0000269" key="14">
    <source>
    </source>
</evidence>
<evidence type="ECO:0000269" key="15">
    <source>
    </source>
</evidence>
<evidence type="ECO:0000269" key="16">
    <source>
    </source>
</evidence>
<evidence type="ECO:0000269" key="17">
    <source>
    </source>
</evidence>
<evidence type="ECO:0000269" key="18">
    <source>
    </source>
</evidence>
<evidence type="ECO:0000269" key="19">
    <source>
    </source>
</evidence>
<evidence type="ECO:0000269" key="20">
    <source>
    </source>
</evidence>
<evidence type="ECO:0000269" key="21">
    <source>
    </source>
</evidence>
<evidence type="ECO:0000269" key="22">
    <source>
    </source>
</evidence>
<evidence type="ECO:0000303" key="23">
    <source>
    </source>
</evidence>
<evidence type="ECO:0000305" key="24"/>
<evidence type="ECO:0007744" key="25">
    <source>
    </source>
</evidence>
<evidence type="ECO:0007744" key="26">
    <source>
    </source>
</evidence>
<evidence type="ECO:0007744" key="27">
    <source>
    </source>
</evidence>
<evidence type="ECO:0007744" key="28">
    <source>
    </source>
</evidence>
<evidence type="ECO:0007744" key="29">
    <source>
    </source>
</evidence>
<evidence type="ECO:0007744" key="30">
    <source>
    </source>
</evidence>
<reference key="1">
    <citation type="journal article" date="1997" name="Genomics">
        <title>Molecular cloning of a novel human gene encoding a 63-kDa protein and its sublocalization within the 11q13 locus.</title>
        <authorList>
            <person name="Perelman B."/>
            <person name="Dafni N."/>
            <person name="Naiman T."/>
            <person name="Eli D."/>
            <person name="Yaakov M."/>
            <person name="Feng T.L.Y."/>
            <person name="Sinha S."/>
            <person name="Weber G."/>
            <person name="Khodaei S."/>
            <person name="Sancar A."/>
            <person name="Dotan I."/>
            <person name="Canaani D."/>
        </authorList>
    </citation>
    <scope>NUCLEOTIDE SEQUENCE [GENOMIC DNA]</scope>
</reference>
<reference key="2">
    <citation type="journal article" date="2000" name="Hum. Genet.">
        <title>Identification of a gene disrupted by inv(11)(q13.5;q25) in a patient with left-right axis malformation.</title>
        <authorList>
            <person name="Iida A."/>
            <person name="Emi M."/>
            <person name="Matsuoka R."/>
            <person name="Hiratsuka E."/>
            <person name="Okui K."/>
            <person name="Ohashi H."/>
            <person name="Inazawa J."/>
            <person name="Fukushima Y."/>
            <person name="Imai T."/>
            <person name="Nakamura Y."/>
        </authorList>
    </citation>
    <scope>NUCLEOTIDE SEQUENCE [MRNA] (ISOFORM 1)</scope>
    <scope>TISSUE SPECIFICITY</scope>
    <scope>POSSIBLE INVOLVEMENT IN HETEROTAXY</scope>
    <source>
        <tissue>Heart</tissue>
    </source>
</reference>
<reference key="3">
    <citation type="journal article" date="2004" name="Nat. Genet.">
        <title>Complete sequencing and characterization of 21,243 full-length human cDNAs.</title>
        <authorList>
            <person name="Ota T."/>
            <person name="Suzuki Y."/>
            <person name="Nishikawa T."/>
            <person name="Otsuki T."/>
            <person name="Sugiyama T."/>
            <person name="Irie R."/>
            <person name="Wakamatsu A."/>
            <person name="Hayashi K."/>
            <person name="Sato H."/>
            <person name="Nagai K."/>
            <person name="Kimura K."/>
            <person name="Makita H."/>
            <person name="Sekine M."/>
            <person name="Obayashi M."/>
            <person name="Nishi T."/>
            <person name="Shibahara T."/>
            <person name="Tanaka T."/>
            <person name="Ishii S."/>
            <person name="Yamamoto J."/>
            <person name="Saito K."/>
            <person name="Kawai Y."/>
            <person name="Isono Y."/>
            <person name="Nakamura Y."/>
            <person name="Nagahari K."/>
            <person name="Murakami K."/>
            <person name="Yasuda T."/>
            <person name="Iwayanagi T."/>
            <person name="Wagatsuma M."/>
            <person name="Shiratori A."/>
            <person name="Sudo H."/>
            <person name="Hosoiri T."/>
            <person name="Kaku Y."/>
            <person name="Kodaira H."/>
            <person name="Kondo H."/>
            <person name="Sugawara M."/>
            <person name="Takahashi M."/>
            <person name="Kanda K."/>
            <person name="Yokoi T."/>
            <person name="Furuya T."/>
            <person name="Kikkawa E."/>
            <person name="Omura Y."/>
            <person name="Abe K."/>
            <person name="Kamihara K."/>
            <person name="Katsuta N."/>
            <person name="Sato K."/>
            <person name="Tanikawa M."/>
            <person name="Yamazaki M."/>
            <person name="Ninomiya K."/>
            <person name="Ishibashi T."/>
            <person name="Yamashita H."/>
            <person name="Murakawa K."/>
            <person name="Fujimori K."/>
            <person name="Tanai H."/>
            <person name="Kimata M."/>
            <person name="Watanabe M."/>
            <person name="Hiraoka S."/>
            <person name="Chiba Y."/>
            <person name="Ishida S."/>
            <person name="Ono Y."/>
            <person name="Takiguchi S."/>
            <person name="Watanabe S."/>
            <person name="Yosida M."/>
            <person name="Hotuta T."/>
            <person name="Kusano J."/>
            <person name="Kanehori K."/>
            <person name="Takahashi-Fujii A."/>
            <person name="Hara H."/>
            <person name="Tanase T.-O."/>
            <person name="Nomura Y."/>
            <person name="Togiya S."/>
            <person name="Komai F."/>
            <person name="Hara R."/>
            <person name="Takeuchi K."/>
            <person name="Arita M."/>
            <person name="Imose N."/>
            <person name="Musashino K."/>
            <person name="Yuuki H."/>
            <person name="Oshima A."/>
            <person name="Sasaki N."/>
            <person name="Aotsuka S."/>
            <person name="Yoshikawa Y."/>
            <person name="Matsunawa H."/>
            <person name="Ichihara T."/>
            <person name="Shiohata N."/>
            <person name="Sano S."/>
            <person name="Moriya S."/>
            <person name="Momiyama H."/>
            <person name="Satoh N."/>
            <person name="Takami S."/>
            <person name="Terashima Y."/>
            <person name="Suzuki O."/>
            <person name="Nakagawa S."/>
            <person name="Senoh A."/>
            <person name="Mizoguchi H."/>
            <person name="Goto Y."/>
            <person name="Shimizu F."/>
            <person name="Wakebe H."/>
            <person name="Hishigaki H."/>
            <person name="Watanabe T."/>
            <person name="Sugiyama A."/>
            <person name="Takemoto M."/>
            <person name="Kawakami B."/>
            <person name="Yamazaki M."/>
            <person name="Watanabe K."/>
            <person name="Kumagai A."/>
            <person name="Itakura S."/>
            <person name="Fukuzumi Y."/>
            <person name="Fujimori Y."/>
            <person name="Komiyama M."/>
            <person name="Tashiro H."/>
            <person name="Tanigami A."/>
            <person name="Fujiwara T."/>
            <person name="Ono T."/>
            <person name="Yamada K."/>
            <person name="Fujii Y."/>
            <person name="Ozaki K."/>
            <person name="Hirao M."/>
            <person name="Ohmori Y."/>
            <person name="Kawabata A."/>
            <person name="Hikiji T."/>
            <person name="Kobatake N."/>
            <person name="Inagaki H."/>
            <person name="Ikema Y."/>
            <person name="Okamoto S."/>
            <person name="Okitani R."/>
            <person name="Kawakami T."/>
            <person name="Noguchi S."/>
            <person name="Itoh T."/>
            <person name="Shigeta K."/>
            <person name="Senba T."/>
            <person name="Matsumura K."/>
            <person name="Nakajima Y."/>
            <person name="Mizuno T."/>
            <person name="Morinaga M."/>
            <person name="Sasaki M."/>
            <person name="Togashi T."/>
            <person name="Oyama M."/>
            <person name="Hata H."/>
            <person name="Watanabe M."/>
            <person name="Komatsu T."/>
            <person name="Mizushima-Sugano J."/>
            <person name="Satoh T."/>
            <person name="Shirai Y."/>
            <person name="Takahashi Y."/>
            <person name="Nakagawa K."/>
            <person name="Okumura K."/>
            <person name="Nagase T."/>
            <person name="Nomura N."/>
            <person name="Kikuchi H."/>
            <person name="Masuho Y."/>
            <person name="Yamashita R."/>
            <person name="Nakai K."/>
            <person name="Yada T."/>
            <person name="Nakamura Y."/>
            <person name="Ohara O."/>
            <person name="Isogai T."/>
            <person name="Sugano S."/>
        </authorList>
    </citation>
    <scope>NUCLEOTIDE SEQUENCE [LARGE SCALE MRNA] (ISOFORM 2)</scope>
    <source>
        <tissue>Tongue</tissue>
    </source>
</reference>
<reference key="4">
    <citation type="journal article" date="2006" name="Nature">
        <title>Human chromosome 11 DNA sequence and analysis including novel gene identification.</title>
        <authorList>
            <person name="Taylor T.D."/>
            <person name="Noguchi H."/>
            <person name="Totoki Y."/>
            <person name="Toyoda A."/>
            <person name="Kuroki Y."/>
            <person name="Dewar K."/>
            <person name="Lloyd C."/>
            <person name="Itoh T."/>
            <person name="Takeda T."/>
            <person name="Kim D.-W."/>
            <person name="She X."/>
            <person name="Barlow K.F."/>
            <person name="Bloom T."/>
            <person name="Bruford E."/>
            <person name="Chang J.L."/>
            <person name="Cuomo C.A."/>
            <person name="Eichler E."/>
            <person name="FitzGerald M.G."/>
            <person name="Jaffe D.B."/>
            <person name="LaButti K."/>
            <person name="Nicol R."/>
            <person name="Park H.-S."/>
            <person name="Seaman C."/>
            <person name="Sougnez C."/>
            <person name="Yang X."/>
            <person name="Zimmer A.R."/>
            <person name="Zody M.C."/>
            <person name="Birren B.W."/>
            <person name="Nusbaum C."/>
            <person name="Fujiyama A."/>
            <person name="Hattori M."/>
            <person name="Rogers J."/>
            <person name="Lander E.S."/>
            <person name="Sakaki Y."/>
        </authorList>
    </citation>
    <scope>NUCLEOTIDE SEQUENCE [LARGE SCALE GENOMIC DNA]</scope>
</reference>
<reference key="5">
    <citation type="journal article" date="2006" name="Nat. Cell Biol.">
        <title>Autophagic and tumour suppressor activity of a novel Beclin1-binding protein UVRAG.</title>
        <authorList>
            <person name="Liang C."/>
            <person name="Feng P."/>
            <person name="Ku B."/>
            <person name="Dotan I."/>
            <person name="Canaani D."/>
            <person name="Oh B.H."/>
            <person name="Jung J.U."/>
        </authorList>
    </citation>
    <scope>ASSOCIATION WITH THE PI3K COMPLEX</scope>
    <scope>FUNCTION</scope>
</reference>
<reference key="6">
    <citation type="journal article" date="2007" name="Nat. Cell Biol.">
        <title>Bif-1 interacts with Beclin 1 through UVRAG and regulates autophagy and tumorigenesis.</title>
        <authorList>
            <person name="Takahashi Y."/>
            <person name="Coppola D."/>
            <person name="Matsushita N."/>
            <person name="Cualing H.D."/>
            <person name="Sun M."/>
            <person name="Sato Y."/>
            <person name="Liang C."/>
            <person name="Jung J.U."/>
            <person name="Cheng J.Q."/>
            <person name="Mule J.J."/>
            <person name="Pledger W.J."/>
            <person name="Wang H.G."/>
        </authorList>
    </citation>
    <scope>INTERACTION WITH SH3GLB1</scope>
</reference>
<reference key="7">
    <citation type="journal article" date="2008" name="Mol. Biol. Cell">
        <title>Beclin 1 forms two distinct phosphatidylinositol 3-kinase complexes with mammalian Atg14 and UVRAG.</title>
        <authorList>
            <person name="Itakura E."/>
            <person name="Kishi C."/>
            <person name="Inoue K."/>
            <person name="Mizushima N."/>
        </authorList>
    </citation>
    <scope>INTERACTION WITH BECN1 AND PIK3C3</scope>
    <scope>SUBCELLULAR LOCATION</scope>
</reference>
<reference key="8">
    <citation type="journal article" date="2008" name="Mol. Cell">
        <title>Kinase-selective enrichment enables quantitative phosphoproteomics of the kinome across the cell cycle.</title>
        <authorList>
            <person name="Daub H."/>
            <person name="Olsen J.V."/>
            <person name="Bairlein M."/>
            <person name="Gnad F."/>
            <person name="Oppermann F.S."/>
            <person name="Korner R."/>
            <person name="Greff Z."/>
            <person name="Keri G."/>
            <person name="Stemmann O."/>
            <person name="Mann M."/>
        </authorList>
    </citation>
    <scope>PHOSPHORYLATION [LARGE SCALE ANALYSIS] AT SER-498</scope>
    <scope>IDENTIFICATION BY MASS SPECTROMETRY [LARGE SCALE ANALYSIS]</scope>
    <source>
        <tissue>Cervix carcinoma</tissue>
    </source>
</reference>
<reference key="9">
    <citation type="journal article" date="2008" name="Nat. Cell Biol.">
        <title>Beclin1-binding UVRAG targets the class C Vps complex to coordinate autophagosome maturation and endocytic trafficking.</title>
        <authorList>
            <person name="Liang C."/>
            <person name="Lee J.S."/>
            <person name="Inn K.S."/>
            <person name="Gack M.U."/>
            <person name="Li Q."/>
            <person name="Roberts E.A."/>
            <person name="Vergne I."/>
            <person name="Deretic V."/>
            <person name="Feng P."/>
            <person name="Akazawa C."/>
            <person name="Jung J.U."/>
        </authorList>
    </citation>
    <scope>FUNCTION</scope>
    <scope>INTERACTION WITH VPS16; VPS11; VPS18; VPS33 AND VPS39</scope>
    <scope>SUBCELLULAR LOCATION</scope>
</reference>
<reference key="10">
    <citation type="journal article" date="2008" name="Proc. Natl. Acad. Sci. U.S.A.">
        <title>A quantitative atlas of mitotic phosphorylation.</title>
        <authorList>
            <person name="Dephoure N."/>
            <person name="Zhou C."/>
            <person name="Villen J."/>
            <person name="Beausoleil S.A."/>
            <person name="Bakalarski C.E."/>
            <person name="Elledge S.J."/>
            <person name="Gygi S.P."/>
        </authorList>
    </citation>
    <scope>PHOSPHORYLATION [LARGE SCALE ANALYSIS] AT THR-518</scope>
    <scope>IDENTIFICATION BY MASS SPECTROMETRY [LARGE SCALE ANALYSIS]</scope>
    <source>
        <tissue>Cervix carcinoma</tissue>
    </source>
</reference>
<reference key="11">
    <citation type="journal article" date="2008" name="Proc. Natl. Acad. Sci. U.S.A.">
        <title>Identification of Barkor as a mammalian autophagy-specific factor for Beclin 1 and class III phosphatidylinositol 3-kinase.</title>
        <authorList>
            <person name="Sun Q."/>
            <person name="Fan W."/>
            <person name="Chen K."/>
            <person name="Ding X."/>
            <person name="Chen S."/>
            <person name="Zhong Q."/>
        </authorList>
    </citation>
    <scope>INTERACTION WITH BECN1</scope>
</reference>
<reference key="12">
    <citation type="journal article" date="2009" name="Mol. Cell. Proteomics">
        <title>Large-scale proteomics analysis of the human kinome.</title>
        <authorList>
            <person name="Oppermann F.S."/>
            <person name="Gnad F."/>
            <person name="Olsen J.V."/>
            <person name="Hornberger R."/>
            <person name="Greff Z."/>
            <person name="Keri G."/>
            <person name="Mann M."/>
            <person name="Daub H."/>
        </authorList>
    </citation>
    <scope>PHOSPHORYLATION [LARGE SCALE ANALYSIS] AT SER-498 AND SER-571</scope>
    <scope>IDENTIFICATION BY MASS SPECTROMETRY [LARGE SCALE ANALYSIS]</scope>
</reference>
<reference key="13">
    <citation type="journal article" date="2009" name="Nat. Cell Biol.">
        <title>Two Beclin 1-binding proteins, Atg14L and Rubicon, reciprocally regulate autophagy at different stages.</title>
        <authorList>
            <person name="Matsunaga K."/>
            <person name="Saitoh T."/>
            <person name="Tabata K."/>
            <person name="Omori H."/>
            <person name="Satoh T."/>
            <person name="Kurotori N."/>
            <person name="Maejima I."/>
            <person name="Shirahama-Noda K."/>
            <person name="Ichimura T."/>
            <person name="Isobe T."/>
            <person name="Akira S."/>
            <person name="Noda T."/>
            <person name="Yoshimori T."/>
        </authorList>
    </citation>
    <scope>INTERACTION WITH BECN1; RUBCN; PIK3C3 AND PIK3R4</scope>
</reference>
<reference key="14">
    <citation type="journal article" date="2009" name="Sci. Signal.">
        <title>Quantitative phosphoproteomic analysis of T cell receptor signaling reveals system-wide modulation of protein-protein interactions.</title>
        <authorList>
            <person name="Mayya V."/>
            <person name="Lundgren D.H."/>
            <person name="Hwang S.-I."/>
            <person name="Rezaul K."/>
            <person name="Wu L."/>
            <person name="Eng J.K."/>
            <person name="Rodionov V."/>
            <person name="Han D.K."/>
        </authorList>
    </citation>
    <scope>PHOSPHORYLATION [LARGE SCALE ANALYSIS] AT THR-518</scope>
    <scope>IDENTIFICATION BY MASS SPECTROMETRY [LARGE SCALE ANALYSIS]</scope>
    <source>
        <tissue>Leukemic T-cell</tissue>
    </source>
</reference>
<reference key="15">
    <citation type="journal article" date="2010" name="Exp. Cell Res.">
        <title>A phosphatidylinositol 3-kinase class III sub-complex containing VPS15, VPS34, Beclin 1, UVRAG and BIF-1 regulates cytokinesis and degradative endocytic traffic.</title>
        <authorList>
            <person name="Thoresen S.B."/>
            <person name="Pedersen N.M."/>
            <person name="Liestol K."/>
            <person name="Stenmark H."/>
        </authorList>
    </citation>
    <scope>FUNCTION</scope>
    <scope>SUBUNIT</scope>
    <scope>SUBCELLULAR LOCATION</scope>
</reference>
<reference key="16">
    <citation type="journal article" date="2010" name="Proc. Natl. Acad. Sci. U.S.A.">
        <title>Rubicon controls endosome maturation as a Rab7 effector.</title>
        <authorList>
            <person name="Sun Q."/>
            <person name="Westphal W."/>
            <person name="Wong K.N."/>
            <person name="Tan I."/>
            <person name="Zhong Q."/>
        </authorList>
    </citation>
    <scope>INTERACTION WITH RAB7A</scope>
</reference>
<reference key="17">
    <citation type="journal article" date="2010" name="Sci. Signal.">
        <title>Quantitative phosphoproteomics reveals widespread full phosphorylation site occupancy during mitosis.</title>
        <authorList>
            <person name="Olsen J.V."/>
            <person name="Vermeulen M."/>
            <person name="Santamaria A."/>
            <person name="Kumar C."/>
            <person name="Miller M.L."/>
            <person name="Jensen L.J."/>
            <person name="Gnad F."/>
            <person name="Cox J."/>
            <person name="Jensen T.S."/>
            <person name="Nigg E.A."/>
            <person name="Brunak S."/>
            <person name="Mann M."/>
        </authorList>
    </citation>
    <scope>PHOSPHORYLATION [LARGE SCALE ANALYSIS] AT SER-498</scope>
    <scope>IDENTIFICATION BY MASS SPECTROMETRY [LARGE SCALE ANALYSIS]</scope>
    <source>
        <tissue>Cervix carcinoma</tissue>
    </source>
</reference>
<reference key="18">
    <citation type="journal article" date="2012" name="Dev. Cell">
        <title>A dual role for UVRAG in maintaining chromosomal stability independent of autophagy.</title>
        <authorList>
            <person name="Zhao Z."/>
            <person name="Oh S."/>
            <person name="Li D."/>
            <person name="Ni D."/>
            <person name="Pirooz S.D."/>
            <person name="Lee J.H."/>
            <person name="Yang S."/>
            <person name="Lee J.Y."/>
            <person name="Ghozalli I."/>
            <person name="Costanzo V."/>
            <person name="Stark J.M."/>
            <person name="Liang C."/>
        </authorList>
    </citation>
    <scope>FUNCTION</scope>
    <scope>INTERACTION WITH PRKDC; XRCC6; XRCC5 AND CEP63</scope>
    <scope>SUBCELLULAR LOCATION</scope>
</reference>
<reference key="19">
    <citation type="journal article" date="2012" name="EMBO J.">
        <title>Genome-wide siRNA screen reveals amino acid starvation-induced autophagy requires SCOC and WAC.</title>
        <authorList>
            <person name="McKnight N.C."/>
            <person name="Jefferies H.B."/>
            <person name="Alemu E.A."/>
            <person name="Saunders R.E."/>
            <person name="Howell M."/>
            <person name="Johansen T."/>
            <person name="Tooze S.A."/>
        </authorList>
    </citation>
    <scope>INTERACTION WITH SCOC AND FEZ1</scope>
</reference>
<reference key="20">
    <citation type="journal article" date="2012" name="J. Biol. Chem.">
        <title>Receptor signaling lymphocyte-activation molecule family 1 (Slamf1) regulates membrane fusion and NADPH oxidase 2 (NOX2) activity by recruiting a Beclin-1/Vps34/ultraviolet radiation resistance-associated gene (UVRAG) complex.</title>
        <authorList>
            <person name="Ma C."/>
            <person name="Wang N."/>
            <person name="Detre C."/>
            <person name="Wang G."/>
            <person name="O'Keeffe M."/>
            <person name="Terhorst C."/>
        </authorList>
    </citation>
    <scope>INTERACTION WITH SLAMF1</scope>
</reference>
<reference key="21">
    <citation type="journal article" date="2013" name="Cell">
        <title>Beclin 2 functions in autophagy, degradation of G protein-coupled receptors, and metabolism.</title>
        <authorList>
            <person name="He C."/>
            <person name="Wei Y."/>
            <person name="Sun K."/>
            <person name="Li B."/>
            <person name="Dong X."/>
            <person name="Zou Z."/>
            <person name="Liu Y."/>
            <person name="Kinch L.N."/>
            <person name="Khan S."/>
            <person name="Sinha S."/>
            <person name="Xavier R.J."/>
            <person name="Grishin N.V."/>
            <person name="Xiao G."/>
            <person name="Eskelinen E.L."/>
            <person name="Scherer P.E."/>
            <person name="Whistler J.L."/>
            <person name="Levine B."/>
        </authorList>
    </citation>
    <scope>INTERACTION WITH BECN1P1/BECN2</scope>
</reference>
<reference key="22">
    <citation type="journal article" date="2013" name="J. Proteome Res.">
        <title>Toward a comprehensive characterization of a human cancer cell phosphoproteome.</title>
        <authorList>
            <person name="Zhou H."/>
            <person name="Di Palma S."/>
            <person name="Preisinger C."/>
            <person name="Peng M."/>
            <person name="Polat A.N."/>
            <person name="Heck A.J."/>
            <person name="Mohammed S."/>
        </authorList>
    </citation>
    <scope>PHOSPHORYLATION [LARGE SCALE ANALYSIS] AT SER-498; THR-518; SER-550 AND SER-689</scope>
    <scope>IDENTIFICATION BY MASS SPECTROMETRY [LARGE SCALE ANALYSIS]</scope>
    <source>
        <tissue>Cervix carcinoma</tissue>
        <tissue>Erythroleukemia</tissue>
    </source>
</reference>
<reference key="23">
    <citation type="journal article" date="2013" name="Mol. Cell. Biol.">
        <title>Role of membrane association and Atg14-dependent phosphorylation in beclin-1-mediated autophagy.</title>
        <authorList>
            <person name="Fogel A.I."/>
            <person name="Dlouhy B.J."/>
            <person name="Wang C."/>
            <person name="Ryu S.W."/>
            <person name="Neutzner A."/>
            <person name="Hasson S.A."/>
            <person name="Sideris D.P."/>
            <person name="Abeliovich H."/>
            <person name="Youle R.J."/>
        </authorList>
    </citation>
    <scope>INTERACTION WITH BECN1</scope>
</reference>
<reference key="24">
    <citation type="journal article" date="2013" name="Nat. Cell Biol.">
        <title>PtdIns(3)P-bound UVRAG coordinates Golgi-ER retrograde and Atg9 transport by differential interactions with the ER tether and the beclin 1 complex.</title>
        <authorList>
            <person name="He S."/>
            <person name="Ni D."/>
            <person name="Ma B."/>
            <person name="Lee J.H."/>
            <person name="Zhang T."/>
            <person name="Ghozalli I."/>
            <person name="Pirooz S.D."/>
            <person name="Zhao Z."/>
            <person name="Bharatham N."/>
            <person name="Li B."/>
            <person name="Oh S."/>
            <person name="Lee W.H."/>
            <person name="Takahashi Y."/>
            <person name="Wang H.G."/>
            <person name="Minassian A."/>
            <person name="Feng P."/>
            <person name="Deretic V."/>
            <person name="Pepperkok R."/>
            <person name="Tagaya M."/>
            <person name="Yoon H.S."/>
            <person name="Liang C."/>
        </authorList>
    </citation>
    <scope>FUNCTION</scope>
    <scope>INTERACTION WITH RINT1</scope>
    <scope>SUBCELLULAR LOCATION</scope>
    <scope>ASSOCIATION WITH THE PI3K COMPLEX</scope>
    <scope>ASSOCIATION WITH THE NRZ COMPLEX</scope>
</reference>
<reference key="25">
    <citation type="journal article" date="2014" name="J. Proteomics">
        <title>An enzyme assisted RP-RPLC approach for in-depth analysis of human liver phosphoproteome.</title>
        <authorList>
            <person name="Bian Y."/>
            <person name="Song C."/>
            <person name="Cheng K."/>
            <person name="Dong M."/>
            <person name="Wang F."/>
            <person name="Huang J."/>
            <person name="Sun D."/>
            <person name="Wang L."/>
            <person name="Ye M."/>
            <person name="Zou H."/>
        </authorList>
    </citation>
    <scope>IDENTIFICATION BY MASS SPECTROMETRY [LARGE SCALE ANALYSIS]</scope>
    <source>
        <tissue>Liver</tissue>
    </source>
</reference>
<reference key="26">
    <citation type="journal article" date="2014" name="Proc. Natl. Acad. Sci. U.S.A.">
        <title>UVRAG is required for virus entry through combinatorial interaction with the class C-Vps complex and SNAREs.</title>
        <authorList>
            <person name="Pirooz S.D."/>
            <person name="He S."/>
            <person name="Zhang T."/>
            <person name="Zhang X."/>
            <person name="Zhao Z."/>
            <person name="Oh S."/>
            <person name="O'Connell D."/>
            <person name="Khalilzadeh P."/>
            <person name="Amini-Bavil-Olyaee S."/>
            <person name="Farzan M."/>
            <person name="Liang C."/>
        </authorList>
    </citation>
    <scope>FUNCTION</scope>
    <scope>INTERACTION WITH STX7; VTI1B AND STX8</scope>
</reference>
<reference key="27">
    <citation type="journal article" date="2015" name="Mol. Cell">
        <title>mTORC1 phosphorylates UVRAG to negatively regulate autophagosome and endosome maturation.</title>
        <authorList>
            <person name="Kim Y.M."/>
            <person name="Jung C.H."/>
            <person name="Seo M."/>
            <person name="Kim E.K."/>
            <person name="Park J.M."/>
            <person name="Bae S.S."/>
            <person name="Kim D.H."/>
        </authorList>
    </citation>
    <scope>PHOSPHORYLATION AT SER-493; SER-498; SER-508; SER-522; SER-549; SER-550 AND SER-582</scope>
    <scope>INTERACTION WITH RUBCN; VPS39; VPS16 AND RAB7A</scope>
    <scope>MUTAGENESIS OF SER-498</scope>
</reference>
<reference key="28">
    <citation type="journal article" date="2016" name="Proc. Natl. Acad. Sci. U.S.A.">
        <title>Multistep regulation of autophagy by WNK1.</title>
        <authorList>
            <person name="Gallolu Kankanamalage S."/>
            <person name="Lee A.Y."/>
            <person name="Wichaidit C."/>
            <person name="Lorente-Rodriguez A."/>
            <person name="Shah A.M."/>
            <person name="Stippec S."/>
            <person name="Whitehurst A.W."/>
            <person name="Cobb M.H."/>
        </authorList>
    </citation>
    <scope>INTERACTION WITH WNK1</scope>
</reference>
<reference key="29">
    <citation type="journal article" date="2017" name="Mol. Cell">
        <title>Pacer mediates the function of class III PI3K and HOPS complexes in autophagosome maturation by engaging Stx17.</title>
        <authorList>
            <person name="Cheng X."/>
            <person name="Ma X."/>
            <person name="Ding X."/>
            <person name="Li L."/>
            <person name="Jiang X."/>
            <person name="Shen Z."/>
            <person name="Chen S."/>
            <person name="Liu W."/>
            <person name="Gong W."/>
            <person name="Sun Q."/>
        </authorList>
    </citation>
    <scope>FUNCTION</scope>
    <scope>INTERACTION WITH RUBCNL/PACER</scope>
    <scope>SUBCELLULAR LOCATION</scope>
</reference>
<gene>
    <name type="primary">UVRAG</name>
</gene>
<proteinExistence type="evidence at protein level"/>
<sequence>MSASASVGGPVPQPPPGPAAALPPGSAARALHVELPSQQRRLRHLRNIAARNIVNRNGHQLLDTYFTLHLCSTEKIYKEFYRSEVIKNSLNPTWRSLDFGIMPDRLDTSVSCFVVKIWGGKENIYQLLIEWKVCLDGLKYLGQQIHARNQNEIIFGLNDGYYGAPFEHKGYSNAQKTILLQVDQNCVRNSYDVFSLLRLHRAQCAIKQTQVTVQKIGKEIEEKLRLTSTSNELKKKSECLQLKILVLQNELERQKKALGREVALLHKQQIALQDKGSAFSAEHLKLQLQKESLNELRKECTAKRELFLKTNAQLTIRCRQLLSELSYIYPIDLNEHKDYFVCGVKLPNSEDFQAKDDGSIAVALGYTAHLVSMISFFLQVPLRYPIIHKGSRSTIKDNINDKLTEKEREFPLYPKGGEKLQFDYGVYLLNKNIAQLRYQHGLGTPDLRQTLPNLKNFMEHGLMVRCDRHHTSSAIPVPKRQSSIFGGADVGFSGGIPSPDKGHRKRASSENERLQYKTPPPSYNSALAQPVTTVPSMGETERKITSLSSSLDTSLDFSKENKKKGEDLVGSLNGGHANVHPSQEQGEALSGHRATVNGTLLPSEQAGSASVQLPGEFHPVSEAELCCTVEQAEEIIGLEATGFASGDQLEAFNCIPVDSAVAVECDEQVLGEFEEFSRRIYALNENVSSFRRPRRSSDK</sequence>
<dbReference type="EMBL" id="X99050">
    <property type="protein sequence ID" value="CAA67507.1"/>
    <property type="status" value="ALT_SEQ"/>
    <property type="molecule type" value="Genomic_DNA"/>
</dbReference>
<dbReference type="EMBL" id="AB012958">
    <property type="protein sequence ID" value="BAA90829.1"/>
    <property type="molecule type" value="mRNA"/>
</dbReference>
<dbReference type="EMBL" id="AK095352">
    <property type="protein sequence ID" value="BAG53033.1"/>
    <property type="molecule type" value="mRNA"/>
</dbReference>
<dbReference type="EMBL" id="AK296871">
    <property type="protein sequence ID" value="BAG59434.1"/>
    <property type="molecule type" value="mRNA"/>
</dbReference>
<dbReference type="EMBL" id="AK316133">
    <property type="protein sequence ID" value="BAH14504.1"/>
    <property type="molecule type" value="mRNA"/>
</dbReference>
<dbReference type="EMBL" id="AP002340">
    <property type="status" value="NOT_ANNOTATED_CDS"/>
    <property type="molecule type" value="Genomic_DNA"/>
</dbReference>
<dbReference type="EMBL" id="AP003031">
    <property type="status" value="NOT_ANNOTATED_CDS"/>
    <property type="molecule type" value="Genomic_DNA"/>
</dbReference>
<dbReference type="EMBL" id="AP003168">
    <property type="status" value="NOT_ANNOTATED_CDS"/>
    <property type="molecule type" value="Genomic_DNA"/>
</dbReference>
<dbReference type="CCDS" id="CCDS8241.1">
    <molecule id="Q9P2Y5-1"/>
</dbReference>
<dbReference type="RefSeq" id="NP_003360.2">
    <molecule id="Q9P2Y5-1"/>
    <property type="nucleotide sequence ID" value="NM_003369.3"/>
</dbReference>
<dbReference type="RefSeq" id="XP_047283478.1">
    <molecule id="Q9P2Y5-2"/>
    <property type="nucleotide sequence ID" value="XM_047427522.1"/>
</dbReference>
<dbReference type="RefSeq" id="XP_054225793.1">
    <molecule id="Q9P2Y5-2"/>
    <property type="nucleotide sequence ID" value="XM_054369818.1"/>
</dbReference>
<dbReference type="PDB" id="7BL1">
    <property type="method" value="EM"/>
    <property type="resolution" value="9.80 A"/>
    <property type="chains" value="AAA=1-699"/>
</dbReference>
<dbReference type="PDBsum" id="7BL1"/>
<dbReference type="EMDB" id="EMD-12214"/>
<dbReference type="EMDB" id="EMD-12237"/>
<dbReference type="EMDB" id="EMD-12238"/>
<dbReference type="SMR" id="Q9P2Y5"/>
<dbReference type="BioGRID" id="113248">
    <property type="interactions" value="66"/>
</dbReference>
<dbReference type="ComplexPortal" id="CPX-74">
    <property type="entry name" value="Phosphatidylinositol 3-kinase complex, class III, UVRAG variant"/>
</dbReference>
<dbReference type="CORUM" id="Q9P2Y5"/>
<dbReference type="DIP" id="DIP-48652N"/>
<dbReference type="FunCoup" id="Q9P2Y5">
    <property type="interactions" value="2363"/>
</dbReference>
<dbReference type="IntAct" id="Q9P2Y5">
    <property type="interactions" value="72"/>
</dbReference>
<dbReference type="MINT" id="Q9P2Y5"/>
<dbReference type="STRING" id="9606.ENSP00000348455"/>
<dbReference type="ChEMBL" id="CHEMBL4296018"/>
<dbReference type="iPTMnet" id="Q9P2Y5"/>
<dbReference type="PhosphoSitePlus" id="Q9P2Y5"/>
<dbReference type="BioMuta" id="UVRAG"/>
<dbReference type="DMDM" id="20140879"/>
<dbReference type="jPOST" id="Q9P2Y5"/>
<dbReference type="MassIVE" id="Q9P2Y5"/>
<dbReference type="PaxDb" id="9606-ENSP00000348455"/>
<dbReference type="PeptideAtlas" id="Q9P2Y5"/>
<dbReference type="ProteomicsDB" id="3674"/>
<dbReference type="ProteomicsDB" id="83914">
    <molecule id="Q9P2Y5-1"/>
</dbReference>
<dbReference type="Pumba" id="Q9P2Y5"/>
<dbReference type="Antibodypedia" id="2165">
    <property type="antibodies" value="399 antibodies from 38 providers"/>
</dbReference>
<dbReference type="DNASU" id="7405"/>
<dbReference type="Ensembl" id="ENST00000356136.8">
    <molecule id="Q9P2Y5-1"/>
    <property type="protein sequence ID" value="ENSP00000348455.3"/>
    <property type="gene ID" value="ENSG00000198382.9"/>
</dbReference>
<dbReference type="Ensembl" id="ENST00000531818.5">
    <molecule id="Q9P2Y5-2"/>
    <property type="protein sequence ID" value="ENSP00000434082.1"/>
    <property type="gene ID" value="ENSG00000198382.9"/>
</dbReference>
<dbReference type="Ensembl" id="ENST00000532130.1">
    <molecule id="Q9P2Y5-2"/>
    <property type="protein sequence ID" value="ENSP00000436270.1"/>
    <property type="gene ID" value="ENSG00000198382.9"/>
</dbReference>
<dbReference type="Ensembl" id="ENST00000533454.5">
    <molecule id="Q9P2Y5-2"/>
    <property type="protein sequence ID" value="ENSP00000431256.1"/>
    <property type="gene ID" value="ENSG00000198382.9"/>
</dbReference>
<dbReference type="GeneID" id="7405"/>
<dbReference type="KEGG" id="hsa:7405"/>
<dbReference type="MANE-Select" id="ENST00000356136.8">
    <property type="protein sequence ID" value="ENSP00000348455.3"/>
    <property type="RefSeq nucleotide sequence ID" value="NM_003369.4"/>
    <property type="RefSeq protein sequence ID" value="NP_003360.2"/>
</dbReference>
<dbReference type="UCSC" id="uc001oxc.4">
    <molecule id="Q9P2Y5-1"/>
    <property type="organism name" value="human"/>
</dbReference>
<dbReference type="AGR" id="HGNC:12640"/>
<dbReference type="CTD" id="7405"/>
<dbReference type="DisGeNET" id="7405"/>
<dbReference type="GeneCards" id="UVRAG"/>
<dbReference type="HGNC" id="HGNC:12640">
    <property type="gene designation" value="UVRAG"/>
</dbReference>
<dbReference type="HPA" id="ENSG00000198382">
    <property type="expression patterns" value="Low tissue specificity"/>
</dbReference>
<dbReference type="MIM" id="602493">
    <property type="type" value="gene"/>
</dbReference>
<dbReference type="neXtProt" id="NX_Q9P2Y5"/>
<dbReference type="OpenTargets" id="ENSG00000198382"/>
<dbReference type="PharmGKB" id="PA37264"/>
<dbReference type="VEuPathDB" id="HostDB:ENSG00000198382"/>
<dbReference type="eggNOG" id="KOG2896">
    <property type="taxonomic scope" value="Eukaryota"/>
</dbReference>
<dbReference type="GeneTree" id="ENSGT00390000012877"/>
<dbReference type="HOGENOM" id="CLU_009375_2_0_1"/>
<dbReference type="InParanoid" id="Q9P2Y5"/>
<dbReference type="OMA" id="HVDQNCV"/>
<dbReference type="OrthoDB" id="72772at2759"/>
<dbReference type="PAN-GO" id="Q9P2Y5">
    <property type="GO annotations" value="4 GO annotations based on evolutionary models"/>
</dbReference>
<dbReference type="PhylomeDB" id="Q9P2Y5"/>
<dbReference type="TreeFam" id="TF323546"/>
<dbReference type="BRENDA" id="2.7.1.137">
    <property type="organism ID" value="2681"/>
</dbReference>
<dbReference type="PathwayCommons" id="Q9P2Y5"/>
<dbReference type="Reactome" id="R-HSA-1632852">
    <property type="pathway name" value="Macroautophagy"/>
</dbReference>
<dbReference type="Reactome" id="R-HSA-9679504">
    <property type="pathway name" value="Translation of Replicase and Assembly of the Replication Transcription Complex"/>
</dbReference>
<dbReference type="Reactome" id="R-HSA-9694676">
    <property type="pathway name" value="Translation of Replicase and Assembly of the Replication Transcription Complex"/>
</dbReference>
<dbReference type="Reactome" id="R-HSA-9754560">
    <property type="pathway name" value="SARS-CoV-2 modulates autophagy"/>
</dbReference>
<dbReference type="SignaLink" id="Q9P2Y5"/>
<dbReference type="SIGNOR" id="Q9P2Y5"/>
<dbReference type="BioGRID-ORCS" id="7405">
    <property type="hits" value="97 hits in 1181 CRISPR screens"/>
</dbReference>
<dbReference type="ChiTaRS" id="UVRAG">
    <property type="organism name" value="human"/>
</dbReference>
<dbReference type="GeneWiki" id="UVRAG"/>
<dbReference type="GenomeRNAi" id="7405"/>
<dbReference type="Pharos" id="Q9P2Y5">
    <property type="development level" value="Tbio"/>
</dbReference>
<dbReference type="PRO" id="PR:Q9P2Y5"/>
<dbReference type="Proteomes" id="UP000005640">
    <property type="component" value="Chromosome 11"/>
</dbReference>
<dbReference type="RNAct" id="Q9P2Y5">
    <property type="molecule type" value="protein"/>
</dbReference>
<dbReference type="Bgee" id="ENSG00000198382">
    <property type="expression patterns" value="Expressed in adrenal tissue and 198 other cell types or tissues"/>
</dbReference>
<dbReference type="ExpressionAtlas" id="Q9P2Y5">
    <property type="expression patterns" value="baseline and differential"/>
</dbReference>
<dbReference type="GO" id="GO:0000421">
    <property type="term" value="C:autophagosome membrane"/>
    <property type="evidence" value="ECO:0000314"/>
    <property type="project" value="UniProtKB"/>
</dbReference>
<dbReference type="GO" id="GO:0005813">
    <property type="term" value="C:centrosome"/>
    <property type="evidence" value="ECO:0000314"/>
    <property type="project" value="UniProtKB"/>
</dbReference>
<dbReference type="GO" id="GO:0000775">
    <property type="term" value="C:chromosome, centromeric region"/>
    <property type="evidence" value="ECO:0007669"/>
    <property type="project" value="UniProtKB-SubCell"/>
</dbReference>
<dbReference type="GO" id="GO:0005737">
    <property type="term" value="C:cytoplasm"/>
    <property type="evidence" value="ECO:0000304"/>
    <property type="project" value="ProtInc"/>
</dbReference>
<dbReference type="GO" id="GO:0005769">
    <property type="term" value="C:early endosome"/>
    <property type="evidence" value="ECO:0000314"/>
    <property type="project" value="UniProtKB"/>
</dbReference>
<dbReference type="GO" id="GO:0005783">
    <property type="term" value="C:endoplasmic reticulum"/>
    <property type="evidence" value="ECO:0000314"/>
    <property type="project" value="CACAO"/>
</dbReference>
<dbReference type="GO" id="GO:0033116">
    <property type="term" value="C:endoplasmic reticulum-Golgi intermediate compartment membrane"/>
    <property type="evidence" value="ECO:0000304"/>
    <property type="project" value="Reactome"/>
</dbReference>
<dbReference type="GO" id="GO:0005768">
    <property type="term" value="C:endosome"/>
    <property type="evidence" value="ECO:0000318"/>
    <property type="project" value="GO_Central"/>
</dbReference>
<dbReference type="GO" id="GO:0005770">
    <property type="term" value="C:late endosome"/>
    <property type="evidence" value="ECO:0000314"/>
    <property type="project" value="UniProtKB"/>
</dbReference>
<dbReference type="GO" id="GO:0005764">
    <property type="term" value="C:lysosome"/>
    <property type="evidence" value="ECO:0000314"/>
    <property type="project" value="UniProtKB"/>
</dbReference>
<dbReference type="GO" id="GO:0000323">
    <property type="term" value="C:lytic vacuole"/>
    <property type="evidence" value="ECO:0000318"/>
    <property type="project" value="GO_Central"/>
</dbReference>
<dbReference type="GO" id="GO:0030496">
    <property type="term" value="C:midbody"/>
    <property type="evidence" value="ECO:0000314"/>
    <property type="project" value="UniProtKB"/>
</dbReference>
<dbReference type="GO" id="GO:0045335">
    <property type="term" value="C:phagocytic vesicle"/>
    <property type="evidence" value="ECO:0007669"/>
    <property type="project" value="Ensembl"/>
</dbReference>
<dbReference type="GO" id="GO:0035032">
    <property type="term" value="C:phosphatidylinositol 3-kinase complex, class III"/>
    <property type="evidence" value="ECO:0000353"/>
    <property type="project" value="ComplexPortal"/>
</dbReference>
<dbReference type="GO" id="GO:0017124">
    <property type="term" value="F:SH3 domain binding"/>
    <property type="evidence" value="ECO:0007669"/>
    <property type="project" value="Ensembl"/>
</dbReference>
<dbReference type="GO" id="GO:0000149">
    <property type="term" value="F:SNARE binding"/>
    <property type="evidence" value="ECO:0000318"/>
    <property type="project" value="GO_Central"/>
</dbReference>
<dbReference type="GO" id="GO:0097352">
    <property type="term" value="P:autophagosome maturation"/>
    <property type="evidence" value="ECO:0000314"/>
    <property type="project" value="UniProtKB"/>
</dbReference>
<dbReference type="GO" id="GO:0006914">
    <property type="term" value="P:autophagy"/>
    <property type="evidence" value="ECO:0000315"/>
    <property type="project" value="CACAO"/>
</dbReference>
<dbReference type="GO" id="GO:0007098">
    <property type="term" value="P:centrosome cycle"/>
    <property type="evidence" value="ECO:0000315"/>
    <property type="project" value="UniProtKB"/>
</dbReference>
<dbReference type="GO" id="GO:0007059">
    <property type="term" value="P:chromosome segregation"/>
    <property type="evidence" value="ECO:0007669"/>
    <property type="project" value="Ensembl"/>
</dbReference>
<dbReference type="GO" id="GO:0006281">
    <property type="term" value="P:DNA repair"/>
    <property type="evidence" value="ECO:0000315"/>
    <property type="project" value="UniProtKB"/>
</dbReference>
<dbReference type="GO" id="GO:0097680">
    <property type="term" value="P:double-strand break repair via classical nonhomologous end joining"/>
    <property type="evidence" value="ECO:0000314"/>
    <property type="project" value="UniProtKB"/>
</dbReference>
<dbReference type="GO" id="GO:0051684">
    <property type="term" value="P:maintenance of Golgi location"/>
    <property type="evidence" value="ECO:0000315"/>
    <property type="project" value="CACAO"/>
</dbReference>
<dbReference type="GO" id="GO:0071985">
    <property type="term" value="P:multivesicular body sorting pathway"/>
    <property type="evidence" value="ECO:0000304"/>
    <property type="project" value="ParkinsonsUK-UCL"/>
</dbReference>
<dbReference type="GO" id="GO:0036092">
    <property type="term" value="P:phosphatidylinositol-3-phosphate biosynthetic process"/>
    <property type="evidence" value="ECO:0000314"/>
    <property type="project" value="ComplexPortal"/>
</dbReference>
<dbReference type="GO" id="GO:1901098">
    <property type="term" value="P:positive regulation of autophagosome maturation"/>
    <property type="evidence" value="ECO:0000304"/>
    <property type="project" value="ParkinsonsUK-UCL"/>
</dbReference>
<dbReference type="GO" id="GO:0032801">
    <property type="term" value="P:receptor catabolic process"/>
    <property type="evidence" value="ECO:0000315"/>
    <property type="project" value="UniProtKB"/>
</dbReference>
<dbReference type="GO" id="GO:0010506">
    <property type="term" value="P:regulation of autophagy"/>
    <property type="evidence" value="ECO:0000314"/>
    <property type="project" value="ComplexPortal"/>
</dbReference>
<dbReference type="GO" id="GO:0032465">
    <property type="term" value="P:regulation of cytokinesis"/>
    <property type="evidence" value="ECO:0000315"/>
    <property type="project" value="UniProtKB"/>
</dbReference>
<dbReference type="GO" id="GO:0071900">
    <property type="term" value="P:regulation of protein serine/threonine kinase activity"/>
    <property type="evidence" value="ECO:0000314"/>
    <property type="project" value="UniProtKB"/>
</dbReference>
<dbReference type="GO" id="GO:0006890">
    <property type="term" value="P:retrograde vesicle-mediated transport, Golgi to endoplasmic reticulum"/>
    <property type="evidence" value="ECO:0000315"/>
    <property type="project" value="CACAO"/>
</dbReference>
<dbReference type="GO" id="GO:0035493">
    <property type="term" value="P:SNARE complex assembly"/>
    <property type="evidence" value="ECO:0000318"/>
    <property type="project" value="GO_Central"/>
</dbReference>
<dbReference type="GO" id="GO:0007051">
    <property type="term" value="P:spindle organization"/>
    <property type="evidence" value="ECO:0007669"/>
    <property type="project" value="Ensembl"/>
</dbReference>
<dbReference type="GO" id="GO:0046718">
    <property type="term" value="P:symbiont entry into host cell"/>
    <property type="evidence" value="ECO:0007669"/>
    <property type="project" value="Ensembl"/>
</dbReference>
<dbReference type="CDD" id="cd00030">
    <property type="entry name" value="C2"/>
    <property type="match status" value="1"/>
</dbReference>
<dbReference type="FunFam" id="2.60.40.150:FF:000148">
    <property type="entry name" value="UV radiation resistance associated gene"/>
    <property type="match status" value="1"/>
</dbReference>
<dbReference type="Gene3D" id="2.60.40.150">
    <property type="entry name" value="C2 domain"/>
    <property type="match status" value="1"/>
</dbReference>
<dbReference type="InterPro" id="IPR000008">
    <property type="entry name" value="C2_dom"/>
</dbReference>
<dbReference type="InterPro" id="IPR035892">
    <property type="entry name" value="C2_domain_sf"/>
</dbReference>
<dbReference type="InterPro" id="IPR018791">
    <property type="entry name" value="UV_resistance/autophagy_Atg14"/>
</dbReference>
<dbReference type="PANTHER" id="PTHR15157">
    <property type="entry name" value="UV RADIATION RESISTANCE-ASSOCIATED GENE PROTEIN"/>
    <property type="match status" value="1"/>
</dbReference>
<dbReference type="PANTHER" id="PTHR15157:SF5">
    <property type="entry name" value="UV RADIATION RESISTANCE-ASSOCIATED GENE PROTEIN"/>
    <property type="match status" value="1"/>
</dbReference>
<dbReference type="Pfam" id="PF10186">
    <property type="entry name" value="ATG14"/>
    <property type="match status" value="1"/>
</dbReference>
<dbReference type="Pfam" id="PF00168">
    <property type="entry name" value="C2"/>
    <property type="match status" value="1"/>
</dbReference>
<dbReference type="SMART" id="SM00239">
    <property type="entry name" value="C2"/>
    <property type="match status" value="1"/>
</dbReference>
<dbReference type="SUPFAM" id="SSF49562">
    <property type="entry name" value="C2 domain (Calcium/lipid-binding domain, CaLB)"/>
    <property type="match status" value="1"/>
</dbReference>
<dbReference type="PROSITE" id="PS50004">
    <property type="entry name" value="C2"/>
    <property type="match status" value="1"/>
</dbReference>
<name>UVRAG_HUMAN</name>
<comment type="function">
    <text evidence="7 11 18 22 24">Versatile protein that is involved in regulation of different cellular pathways implicated in membrane trafficking. Involved in regulation of the COPI-dependent retrograde transport from Golgi and the endoplasmic reticulum by associating with the NRZ complex; the function is dependent on its binding to phosphatidylinositol 3-phosphate (PtdIns(3)P) (PubMed:16799551, PubMed:18552835, PubMed:20643123, PubMed:24056303, PubMed:28306502). During autophagy acts as a regulatory subunit of the alternative PI3K complex II (PI3KC3-C2) that mediates formation of phosphatidylinositol 3-phosphate and is believed to be involved in maturation of autophagosomes and endocytosis. Activates lipid kinase activity of PIK3C3 (PubMed:16799551, PubMed:20643123, PubMed:24056303, PubMed:28306502). Involved in the regulation of degradative endocytic trafficking and cytokinesis, and in regulation of ATG9A transport from the Golgi to the autophagosome; the functions seems to implicate its association with PI3KC3-C2 (PubMed:16799551, PubMed:20643123, PubMed:24056303). Involved in maturation of autophagosomes and degradative endocytic trafficking independently of BECN1 but depending on its association with a class C Vps complex (possibly the HOPS complex); the association is also proposed to promote autophagosome recruitment and activation of Rab7 and endosome-endosome fusion events (PubMed:18552835, PubMed:28306502). Enhances class C Vps complex (possibly HOPS complex) association with a SNARE complex and promotes fusogenic SNARE complex formation during late endocytic membrane fusion (PubMed:24550300). In case of negative-strand RNA virus infection is required for efficient virus entry, promotes endocytic transport of virions and is implicated in a VAMP8-specific fusogenic SNARE complex assembly (PubMed:24550300).</text>
</comment>
<comment type="function">
    <text evidence="15">Involved in maintaining chromosomal stability. Promotes DNA double-strand break (DSB) repair by association with DNA-dependent protein kinase complex DNA-PK and activating it in non-homologous end joining (NHEJ) (PubMed:22542840). Required for centrosome stability and proper chromosome segregation (PubMed:22542840).</text>
</comment>
<comment type="subunit">
    <text evidence="5 6 7 8 9 10 11 12 13 14 15 16 17 18 19 20 21 22">Component of the PI3K (PI3KC3/PI3K-III/class III phosphatidylinositol 3-kinase) complex II (PI3KC3-C2) in which the core composed of the catalytic subunit PIK3C3, the regulatory subunit PIK3R4 and BECN1 is associated with UVRAG; in the complex interacts directly with BECN1. PI3KC3-C2 can associate with further regulatory subunits such as RUBCN and probably SH3GLB1/Bif-1 (PubMed:16799551, PubMed:18843052, PubMed:19050071, PubMed:19270696, PubMed:20643123, PubMed:23878393, PubMed:24056303). Interacts with SH3GLB1; UVRAG bridges the interaction to BECN1 indicative for an association with the PI3K complex PI3KC3-C2 (PubMed:17891140). Interacts with RINT1. Associates with the NRZ complex under basal conditions and dissociates from it under autophagy conditions to associate with the PI3K complex; these complex associations seem to be mutually exclusive (PubMed:24056303). Interacts with VPS16; VPS11; VPS18; VPS33 (VPS33A or VPS33B) and VPS39; indicative for an association with a class C Vps tethering complex (possibly the HOPS complex) (PubMed:18552835, PubMed:25533187). Interacts with RAB7A; RAB7A competes with UVRAG for RUBCN binding (PubMed:20974968, PubMed:25533187). Interacts with STX7, VTI1B, STX8 (PubMed:24550300). Interacts with PRKDC, XRCC6 and XRCC5; indicative for an association with the DNA-dependent protein kinase complex DNA-PK. Interacts with CEP63 (PubMed:22542840). Directly interacts with FEZ1 and SCOC; the interaction with SCOC is reduced by amino acid starvation, but the complex is stabilized in the presence of FEZ1 (PubMed:22354037). Interacts with BECN1P1/BECN2 (PubMed:23954414). Interacts with SLAMF1 (PubMed:22493499). Interacts with RUBCNL/PACER; promoting targeting of UVRAG to autophagosome (PubMed:28306502). Interacts with WNK1 (PubMed:27911840).</text>
</comment>
<comment type="interaction">
    <interactant intactId="EBI-2952704">
        <id>Q9P2Y5</id>
    </interactant>
    <interactant intactId="EBI-516580">
        <id>Q07812</id>
        <label>BAX</label>
    </interactant>
    <organismsDiffer>false</organismsDiffer>
    <experiments>6</experiments>
</comment>
<comment type="interaction">
    <interactant intactId="EBI-2952704">
        <id>Q9P2Y5</id>
    </interactant>
    <interactant intactId="EBI-949378">
        <id>Q14457</id>
        <label>BECN1</label>
    </interactant>
    <organismsDiffer>false</organismsDiffer>
    <experiments>47</experiments>
</comment>
<comment type="interaction">
    <interactant intactId="EBI-2952704">
        <id>Q9P2Y5</id>
    </interactant>
    <interactant intactId="EBI-726944">
        <id>P46934</id>
        <label>NEDD4</label>
    </interactant>
    <organismsDiffer>false</organismsDiffer>
    <experiments>2</experiments>
</comment>
<comment type="interaction">
    <interactant intactId="EBI-2952704">
        <id>Q9P2Y5</id>
    </interactant>
    <interactant intactId="EBI-1056470">
        <id>Q8NEB9</id>
        <label>PIK3C3</label>
    </interactant>
    <organismsDiffer>false</organismsDiffer>
    <experiments>25</experiments>
</comment>
<comment type="interaction">
    <interactant intactId="EBI-2952704">
        <id>Q9P2Y5</id>
    </interactant>
    <interactant intactId="EBI-726876">
        <id>Q6NUQ1</id>
        <label>RINT1</label>
    </interactant>
    <organismsDiffer>false</organismsDiffer>
    <experiments>18</experiments>
</comment>
<comment type="interaction">
    <interactant intactId="EBI-2952704">
        <id>Q9P2Y5</id>
    </interactant>
    <interactant intactId="EBI-2952709">
        <id>Q92622</id>
        <label>RUBCN</label>
    </interactant>
    <organismsDiffer>false</organismsDiffer>
    <experiments>11</experiments>
</comment>
<comment type="interaction">
    <interactant intactId="EBI-2952704">
        <id>Q9P2Y5</id>
    </interactant>
    <interactant intactId="EBI-2623095">
        <id>Q9Y371</id>
        <label>SH3GLB1</label>
    </interactant>
    <organismsDiffer>false</organismsDiffer>
    <experiments>11</experiments>
</comment>
<comment type="interaction">
    <interactant intactId="EBI-2952704">
        <id>Q9P2Y5</id>
    </interactant>
    <interactant intactId="EBI-2527283">
        <id>Q96AX1</id>
        <label>VPS33A</label>
    </interactant>
    <organismsDiffer>false</organismsDiffer>
    <experiments>4</experiments>
</comment>
<comment type="interaction">
    <interactant intactId="EBI-2952704">
        <id>Q9P2Y5</id>
    </interactant>
    <interactant intactId="EBI-1044059">
        <id>P46937</id>
        <label>YAP1</label>
    </interactant>
    <organismsDiffer>false</organismsDiffer>
    <experiments>2</experiments>
</comment>
<comment type="interaction">
    <interactant intactId="EBI-2952704">
        <id>Q9P2Y5</id>
    </interactant>
    <interactant intactId="EBI-25475894">
        <id>P0DTC3</id>
        <label>3a</label>
    </interactant>
    <organismsDiffer>true</organismsDiffer>
    <experiments>6</experiments>
</comment>
<comment type="interaction">
    <interactant intactId="EBI-2952704">
        <id>Q9P2Y5</id>
    </interactant>
    <interactant intactId="EBI-7910086">
        <id>Q9QUM4</id>
        <label>Slamf1</label>
    </interactant>
    <organismsDiffer>true</organismsDiffer>
    <experiments>6</experiments>
</comment>
<comment type="subcellular location">
    <subcellularLocation>
        <location evidence="8">Late endosome</location>
    </subcellularLocation>
    <subcellularLocation>
        <location evidence="8">Lysosome</location>
    </subcellularLocation>
    <subcellularLocation>
        <location evidence="22">Cytoplasmic vesicle</location>
        <location evidence="22">Autophagosome</location>
    </subcellularLocation>
    <subcellularLocation>
        <location evidence="7 8">Early endosome</location>
    </subcellularLocation>
    <subcellularLocation>
        <location evidence="18">Endoplasmic reticulum</location>
    </subcellularLocation>
    <subcellularLocation>
        <location evidence="11">Midbody</location>
    </subcellularLocation>
    <subcellularLocation>
        <location evidence="15">Chromosome</location>
        <location evidence="15">Centromere</location>
    </subcellularLocation>
    <text evidence="18 22">Colocalizes with RAB9-positive compartments involved in retrograde transport from late endosomes to trans-Golgi network. Colocalization with early endosomes is only partial (PubMed:24056303). Recruited to autophagosome following interaction with RUBCNL/PACER (PubMed:28306502).</text>
</comment>
<comment type="alternative products">
    <event type="alternative splicing"/>
    <isoform>
        <id>Q9P2Y5-1</id>
        <name>1</name>
        <sequence type="displayed"/>
    </isoform>
    <isoform>
        <id>Q9P2Y5-2</id>
        <name>2</name>
        <sequence type="described" ref="VSP_056176"/>
    </isoform>
</comment>
<comment type="tissue specificity">
    <text evidence="4">Highly expressed in brain, lung, kidney and liver.</text>
</comment>
<comment type="PTM">
    <text evidence="20">Phosphorylated at Ser-498 by MTOR under basal conditions; increases the interaction with RUBCN implicated in inhibitory effect of RUBCN on PI3KC3 and decreases interaction with RAB7,A and VPS16 and VPS39 (indicative for a class C Vps complex, possibly the HOPS complex) (PubMed:25533187).</text>
</comment>
<comment type="disease">
    <text evidence="4">A chromosomal aberration involving UVRAG has been observed in a patient with heterotaxy (left-right axis malformation). Inversion Inv(11)(q13.5;q25).</text>
</comment>
<comment type="sequence caution" evidence="24">
    <conflict type="erroneous gene model prediction">
        <sequence resource="EMBL-CDS" id="CAA67507"/>
    </conflict>
</comment>
<organism>
    <name type="scientific">Homo sapiens</name>
    <name type="common">Human</name>
    <dbReference type="NCBI Taxonomy" id="9606"/>
    <lineage>
        <taxon>Eukaryota</taxon>
        <taxon>Metazoa</taxon>
        <taxon>Chordata</taxon>
        <taxon>Craniata</taxon>
        <taxon>Vertebrata</taxon>
        <taxon>Euteleostomi</taxon>
        <taxon>Mammalia</taxon>
        <taxon>Eutheria</taxon>
        <taxon>Euarchontoglires</taxon>
        <taxon>Primates</taxon>
        <taxon>Haplorrhini</taxon>
        <taxon>Catarrhini</taxon>
        <taxon>Hominidae</taxon>
        <taxon>Homo</taxon>
    </lineage>
</organism>